<proteinExistence type="inferred from homology"/>
<protein>
    <recommendedName>
        <fullName evidence="1">UDP-N-acetylglucosamine 1-carboxyvinyltransferase</fullName>
        <ecNumber evidence="1">2.5.1.7</ecNumber>
    </recommendedName>
    <alternativeName>
        <fullName evidence="1">Enoylpyruvate transferase</fullName>
    </alternativeName>
    <alternativeName>
        <fullName evidence="1">UDP-N-acetylglucosamine enolpyruvyl transferase</fullName>
        <shortName evidence="1">EPT</shortName>
    </alternativeName>
</protein>
<reference key="1">
    <citation type="journal article" date="2008" name="Appl. Environ. Microbiol.">
        <title>Genome of the epsilonproteobacterial chemolithoautotroph Sulfurimonas denitrificans.</title>
        <authorList>
            <person name="Sievert S.M."/>
            <person name="Scott K.M."/>
            <person name="Klotz M.G."/>
            <person name="Chain P.S.G."/>
            <person name="Hauser L.J."/>
            <person name="Hemp J."/>
            <person name="Huegler M."/>
            <person name="Land M."/>
            <person name="Lapidus A."/>
            <person name="Larimer F.W."/>
            <person name="Lucas S."/>
            <person name="Malfatti S.A."/>
            <person name="Meyer F."/>
            <person name="Paulsen I.T."/>
            <person name="Ren Q."/>
            <person name="Simon J."/>
            <person name="Bailey K."/>
            <person name="Diaz E."/>
            <person name="Fitzpatrick K.A."/>
            <person name="Glover B."/>
            <person name="Gwatney N."/>
            <person name="Korajkic A."/>
            <person name="Long A."/>
            <person name="Mobberley J.M."/>
            <person name="Pantry S.N."/>
            <person name="Pazder G."/>
            <person name="Peterson S."/>
            <person name="Quintanilla J.D."/>
            <person name="Sprinkle R."/>
            <person name="Stephens J."/>
            <person name="Thomas P."/>
            <person name="Vaughn R."/>
            <person name="Weber M.J."/>
            <person name="Wooten L.L."/>
        </authorList>
    </citation>
    <scope>NUCLEOTIDE SEQUENCE [LARGE SCALE GENOMIC DNA]</scope>
    <source>
        <strain>ATCC 33889 / DSM 1251</strain>
    </source>
</reference>
<accession>Q30T46</accession>
<dbReference type="EC" id="2.5.1.7" evidence="1"/>
<dbReference type="EMBL" id="CP000153">
    <property type="protein sequence ID" value="ABB43835.1"/>
    <property type="molecule type" value="Genomic_DNA"/>
</dbReference>
<dbReference type="RefSeq" id="WP_011372189.1">
    <property type="nucleotide sequence ID" value="NC_007575.1"/>
</dbReference>
<dbReference type="SMR" id="Q30T46"/>
<dbReference type="STRING" id="326298.Suden_0556"/>
<dbReference type="KEGG" id="tdn:Suden_0556"/>
<dbReference type="eggNOG" id="COG0766">
    <property type="taxonomic scope" value="Bacteria"/>
</dbReference>
<dbReference type="HOGENOM" id="CLU_027387_0_0_7"/>
<dbReference type="OrthoDB" id="9803760at2"/>
<dbReference type="UniPathway" id="UPA00219"/>
<dbReference type="Proteomes" id="UP000002714">
    <property type="component" value="Chromosome"/>
</dbReference>
<dbReference type="GO" id="GO:0005737">
    <property type="term" value="C:cytoplasm"/>
    <property type="evidence" value="ECO:0007669"/>
    <property type="project" value="UniProtKB-SubCell"/>
</dbReference>
<dbReference type="GO" id="GO:0008760">
    <property type="term" value="F:UDP-N-acetylglucosamine 1-carboxyvinyltransferase activity"/>
    <property type="evidence" value="ECO:0007669"/>
    <property type="project" value="UniProtKB-UniRule"/>
</dbReference>
<dbReference type="GO" id="GO:0051301">
    <property type="term" value="P:cell division"/>
    <property type="evidence" value="ECO:0007669"/>
    <property type="project" value="UniProtKB-KW"/>
</dbReference>
<dbReference type="GO" id="GO:0071555">
    <property type="term" value="P:cell wall organization"/>
    <property type="evidence" value="ECO:0007669"/>
    <property type="project" value="UniProtKB-KW"/>
</dbReference>
<dbReference type="GO" id="GO:0009252">
    <property type="term" value="P:peptidoglycan biosynthetic process"/>
    <property type="evidence" value="ECO:0007669"/>
    <property type="project" value="UniProtKB-UniRule"/>
</dbReference>
<dbReference type="GO" id="GO:0008360">
    <property type="term" value="P:regulation of cell shape"/>
    <property type="evidence" value="ECO:0007669"/>
    <property type="project" value="UniProtKB-KW"/>
</dbReference>
<dbReference type="GO" id="GO:0019277">
    <property type="term" value="P:UDP-N-acetylgalactosamine biosynthetic process"/>
    <property type="evidence" value="ECO:0007669"/>
    <property type="project" value="InterPro"/>
</dbReference>
<dbReference type="CDD" id="cd01555">
    <property type="entry name" value="UdpNAET"/>
    <property type="match status" value="1"/>
</dbReference>
<dbReference type="FunFam" id="3.65.10.10:FF:000001">
    <property type="entry name" value="UDP-N-acetylglucosamine 1-carboxyvinyltransferase"/>
    <property type="match status" value="1"/>
</dbReference>
<dbReference type="Gene3D" id="3.65.10.10">
    <property type="entry name" value="Enolpyruvate transferase domain"/>
    <property type="match status" value="2"/>
</dbReference>
<dbReference type="HAMAP" id="MF_00111">
    <property type="entry name" value="MurA"/>
    <property type="match status" value="1"/>
</dbReference>
<dbReference type="InterPro" id="IPR001986">
    <property type="entry name" value="Enolpyruvate_Tfrase_dom"/>
</dbReference>
<dbReference type="InterPro" id="IPR036968">
    <property type="entry name" value="Enolpyruvate_Tfrase_sf"/>
</dbReference>
<dbReference type="InterPro" id="IPR050068">
    <property type="entry name" value="MurA_subfamily"/>
</dbReference>
<dbReference type="InterPro" id="IPR013792">
    <property type="entry name" value="RNA3'P_cycl/enolpyr_Trfase_a/b"/>
</dbReference>
<dbReference type="InterPro" id="IPR005750">
    <property type="entry name" value="UDP_GlcNAc_COvinyl_MurA"/>
</dbReference>
<dbReference type="NCBIfam" id="TIGR01072">
    <property type="entry name" value="murA"/>
    <property type="match status" value="1"/>
</dbReference>
<dbReference type="NCBIfam" id="NF006873">
    <property type="entry name" value="PRK09369.1"/>
    <property type="match status" value="1"/>
</dbReference>
<dbReference type="PANTHER" id="PTHR43783">
    <property type="entry name" value="UDP-N-ACETYLGLUCOSAMINE 1-CARBOXYVINYLTRANSFERASE"/>
    <property type="match status" value="1"/>
</dbReference>
<dbReference type="PANTHER" id="PTHR43783:SF1">
    <property type="entry name" value="UDP-N-ACETYLGLUCOSAMINE 1-CARBOXYVINYLTRANSFERASE"/>
    <property type="match status" value="1"/>
</dbReference>
<dbReference type="Pfam" id="PF00275">
    <property type="entry name" value="EPSP_synthase"/>
    <property type="match status" value="1"/>
</dbReference>
<dbReference type="SUPFAM" id="SSF55205">
    <property type="entry name" value="EPT/RTPC-like"/>
    <property type="match status" value="1"/>
</dbReference>
<organism>
    <name type="scientific">Sulfurimonas denitrificans (strain ATCC 33889 / DSM 1251)</name>
    <name type="common">Thiomicrospira denitrificans (strain ATCC 33889 / DSM 1251)</name>
    <dbReference type="NCBI Taxonomy" id="326298"/>
    <lineage>
        <taxon>Bacteria</taxon>
        <taxon>Pseudomonadati</taxon>
        <taxon>Campylobacterota</taxon>
        <taxon>Epsilonproteobacteria</taxon>
        <taxon>Campylobacterales</taxon>
        <taxon>Sulfurimonadaceae</taxon>
        <taxon>Sulfurimonas</taxon>
    </lineage>
</organism>
<comment type="function">
    <text evidence="1">Cell wall formation. Adds enolpyruvyl to UDP-N-acetylglucosamine.</text>
</comment>
<comment type="catalytic activity">
    <reaction evidence="1">
        <text>phosphoenolpyruvate + UDP-N-acetyl-alpha-D-glucosamine = UDP-N-acetyl-3-O-(1-carboxyvinyl)-alpha-D-glucosamine + phosphate</text>
        <dbReference type="Rhea" id="RHEA:18681"/>
        <dbReference type="ChEBI" id="CHEBI:43474"/>
        <dbReference type="ChEBI" id="CHEBI:57705"/>
        <dbReference type="ChEBI" id="CHEBI:58702"/>
        <dbReference type="ChEBI" id="CHEBI:68483"/>
        <dbReference type="EC" id="2.5.1.7"/>
    </reaction>
</comment>
<comment type="pathway">
    <text evidence="1">Cell wall biogenesis; peptidoglycan biosynthesis.</text>
</comment>
<comment type="subcellular location">
    <subcellularLocation>
        <location evidence="1">Cytoplasm</location>
    </subcellularLocation>
</comment>
<comment type="similarity">
    <text evidence="1">Belongs to the EPSP synthase family. MurA subfamily.</text>
</comment>
<sequence>MDYLQIKKSPKLHGEIKISGAKNAALPLIAMSILAKNIVTIKNLPHVADIKTLLKLLSNLGAECSSSWENYSTTINTSTLNQTKATYDIVKTMRASILVLGPILARFGHCEVSLPGGCAIGQRPIDLHLKALEQMGAVINIEAGYIHAIAPDGLKGCNIIFDKITVTGTANIVMAAALAKGVTTITNAAREPEVVQLCEILNASGVKIEGIETAVLTIHGTGGELLEIAPFSVIPDRIEAGTYLCAGAITKSELTLKGANAKHLGAVLSKLEEMGSKFTITDDSITIHPSKIIKHVKIVTQEYPAFPTDMQAQFLALATQADGTSIIEERLFENRFMHVSELQRMGADISLNGNVATVNGHSKLSGTDVMATDLRASSALVLAGLVADGITDVHRIYHLDRGYDSLEKKLQNVGADISRLKE</sequence>
<feature type="chain" id="PRO_0000231295" description="UDP-N-acetylglucosamine 1-carboxyvinyltransferase">
    <location>
        <begin position="1"/>
        <end position="422"/>
    </location>
</feature>
<feature type="active site" description="Proton donor" evidence="1">
    <location>
        <position position="118"/>
    </location>
</feature>
<feature type="binding site" evidence="1">
    <location>
        <begin position="22"/>
        <end position="23"/>
    </location>
    <ligand>
        <name>phosphoenolpyruvate</name>
        <dbReference type="ChEBI" id="CHEBI:58702"/>
    </ligand>
</feature>
<feature type="binding site" evidence="1">
    <location>
        <position position="94"/>
    </location>
    <ligand>
        <name>UDP-N-acetyl-alpha-D-glucosamine</name>
        <dbReference type="ChEBI" id="CHEBI:57705"/>
    </ligand>
</feature>
<feature type="binding site" evidence="1">
    <location>
        <begin position="123"/>
        <end position="127"/>
    </location>
    <ligand>
        <name>UDP-N-acetyl-alpha-D-glucosamine</name>
        <dbReference type="ChEBI" id="CHEBI:57705"/>
    </ligand>
</feature>
<feature type="binding site" evidence="1">
    <location>
        <position position="309"/>
    </location>
    <ligand>
        <name>UDP-N-acetyl-alpha-D-glucosamine</name>
        <dbReference type="ChEBI" id="CHEBI:57705"/>
    </ligand>
</feature>
<feature type="binding site" evidence="1">
    <location>
        <position position="331"/>
    </location>
    <ligand>
        <name>UDP-N-acetyl-alpha-D-glucosamine</name>
        <dbReference type="ChEBI" id="CHEBI:57705"/>
    </ligand>
</feature>
<feature type="modified residue" description="2-(S-cysteinyl)pyruvic acid O-phosphothioketal" evidence="1">
    <location>
        <position position="118"/>
    </location>
</feature>
<evidence type="ECO:0000255" key="1">
    <source>
        <dbReference type="HAMAP-Rule" id="MF_00111"/>
    </source>
</evidence>
<name>MURA_SULDN</name>
<keyword id="KW-0131">Cell cycle</keyword>
<keyword id="KW-0132">Cell division</keyword>
<keyword id="KW-0133">Cell shape</keyword>
<keyword id="KW-0961">Cell wall biogenesis/degradation</keyword>
<keyword id="KW-0963">Cytoplasm</keyword>
<keyword id="KW-0573">Peptidoglycan synthesis</keyword>
<keyword id="KW-0670">Pyruvate</keyword>
<keyword id="KW-1185">Reference proteome</keyword>
<keyword id="KW-0808">Transferase</keyword>
<gene>
    <name evidence="1" type="primary">murA</name>
    <name type="ordered locus">Suden_0556</name>
</gene>